<sequence length="219" mass="23847">MVQKPLIKQGYSLAEEIANSVSHGIGLVFGIVGLVLLLVQAVDLNASATAITSYSLYGGSMILLFLASTLYHAIPHQRAKMWLKKFDHCAIYLLIAGTYTPFLLVGLDSPLARGLMIVIWSLALLGILFKLTIAHRFKILSLVTYLAMGWLSLVVIYEMAVKLAAGSVTLLAVGGVVYSLGVIFYVCKRIPYNHAIWHGFVLGGSVCHFLAIYLYIGQA</sequence>
<feature type="chain" id="PRO_0000176900" description="UPF0073 inner membrane protein YqfA">
    <location>
        <begin position="1"/>
        <end position="219"/>
    </location>
</feature>
<feature type="topological domain" description="Cytoplasmic" evidence="2">
    <location>
        <begin position="1"/>
        <end position="23"/>
    </location>
</feature>
<feature type="transmembrane region" description="Helical" evidence="2">
    <location>
        <begin position="24"/>
        <end position="44"/>
    </location>
</feature>
<feature type="topological domain" description="Periplasmic" evidence="2">
    <location>
        <begin position="45"/>
        <end position="53"/>
    </location>
</feature>
<feature type="transmembrane region" description="Helical" evidence="2">
    <location>
        <begin position="54"/>
        <end position="74"/>
    </location>
</feature>
<feature type="topological domain" description="Cytoplasmic" evidence="2">
    <location>
        <begin position="75"/>
        <end position="90"/>
    </location>
</feature>
<feature type="transmembrane region" description="Helical" evidence="2">
    <location>
        <begin position="91"/>
        <end position="111"/>
    </location>
</feature>
<feature type="topological domain" description="Periplasmic" evidence="2">
    <location>
        <begin position="112"/>
        <end position="113"/>
    </location>
</feature>
<feature type="transmembrane region" description="Helical" evidence="2">
    <location>
        <begin position="114"/>
        <end position="134"/>
    </location>
</feature>
<feature type="topological domain" description="Cytoplasmic" evidence="2">
    <location>
        <begin position="135"/>
        <end position="138"/>
    </location>
</feature>
<feature type="transmembrane region" description="Helical" evidence="2">
    <location>
        <begin position="139"/>
        <end position="159"/>
    </location>
</feature>
<feature type="topological domain" description="Periplasmic" evidence="2">
    <location>
        <begin position="160"/>
        <end position="165"/>
    </location>
</feature>
<feature type="transmembrane region" description="Helical" evidence="2">
    <location>
        <begin position="166"/>
        <end position="186"/>
    </location>
</feature>
<feature type="topological domain" description="Cytoplasmic" evidence="2">
    <location>
        <begin position="187"/>
        <end position="195"/>
    </location>
</feature>
<feature type="transmembrane region" description="Helical" evidence="2">
    <location>
        <begin position="196"/>
        <end position="216"/>
    </location>
</feature>
<feature type="topological domain" description="Periplasmic" evidence="2">
    <location>
        <begin position="217"/>
        <end position="219"/>
    </location>
</feature>
<comment type="subcellular location">
    <subcellularLocation>
        <location evidence="1">Cell inner membrane</location>
        <topology evidence="2">Multi-pass membrane protein</topology>
    </subcellularLocation>
</comment>
<comment type="similarity">
    <text evidence="3">Belongs to the UPF0073 (Hly-III) family.</text>
</comment>
<name>YQFA_ECO57</name>
<keyword id="KW-0997">Cell inner membrane</keyword>
<keyword id="KW-1003">Cell membrane</keyword>
<keyword id="KW-0472">Membrane</keyword>
<keyword id="KW-1185">Reference proteome</keyword>
<keyword id="KW-0812">Transmembrane</keyword>
<keyword id="KW-1133">Transmembrane helix</keyword>
<gene>
    <name type="primary">yqfA</name>
    <name type="ordered locus">Z4237</name>
    <name type="ordered locus">ECs3771</name>
</gene>
<accession>P67155</accession>
<accession>Q46827</accession>
<protein>
    <recommendedName>
        <fullName>UPF0073 inner membrane protein YqfA</fullName>
    </recommendedName>
</protein>
<proteinExistence type="inferred from homology"/>
<reference key="1">
    <citation type="journal article" date="2001" name="Nature">
        <title>Genome sequence of enterohaemorrhagic Escherichia coli O157:H7.</title>
        <authorList>
            <person name="Perna N.T."/>
            <person name="Plunkett G. III"/>
            <person name="Burland V."/>
            <person name="Mau B."/>
            <person name="Glasner J.D."/>
            <person name="Rose D.J."/>
            <person name="Mayhew G.F."/>
            <person name="Evans P.S."/>
            <person name="Gregor J."/>
            <person name="Kirkpatrick H.A."/>
            <person name="Posfai G."/>
            <person name="Hackett J."/>
            <person name="Klink S."/>
            <person name="Boutin A."/>
            <person name="Shao Y."/>
            <person name="Miller L."/>
            <person name="Grotbeck E.J."/>
            <person name="Davis N.W."/>
            <person name="Lim A."/>
            <person name="Dimalanta E.T."/>
            <person name="Potamousis K."/>
            <person name="Apodaca J."/>
            <person name="Anantharaman T.S."/>
            <person name="Lin J."/>
            <person name="Yen G."/>
            <person name="Schwartz D.C."/>
            <person name="Welch R.A."/>
            <person name="Blattner F.R."/>
        </authorList>
    </citation>
    <scope>NUCLEOTIDE SEQUENCE [LARGE SCALE GENOMIC DNA]</scope>
    <source>
        <strain>O157:H7 / EDL933 / ATCC 700927 / EHEC</strain>
    </source>
</reference>
<reference key="2">
    <citation type="journal article" date="2001" name="DNA Res.">
        <title>Complete genome sequence of enterohemorrhagic Escherichia coli O157:H7 and genomic comparison with a laboratory strain K-12.</title>
        <authorList>
            <person name="Hayashi T."/>
            <person name="Makino K."/>
            <person name="Ohnishi M."/>
            <person name="Kurokawa K."/>
            <person name="Ishii K."/>
            <person name="Yokoyama K."/>
            <person name="Han C.-G."/>
            <person name="Ohtsubo E."/>
            <person name="Nakayama K."/>
            <person name="Murata T."/>
            <person name="Tanaka M."/>
            <person name="Tobe T."/>
            <person name="Iida T."/>
            <person name="Takami H."/>
            <person name="Honda T."/>
            <person name="Sasakawa C."/>
            <person name="Ogasawara N."/>
            <person name="Yasunaga T."/>
            <person name="Kuhara S."/>
            <person name="Shiba T."/>
            <person name="Hattori M."/>
            <person name="Shinagawa H."/>
        </authorList>
    </citation>
    <scope>NUCLEOTIDE SEQUENCE [LARGE SCALE GENOMIC DNA]</scope>
    <source>
        <strain>O157:H7 / Sakai / RIMD 0509952 / EHEC</strain>
    </source>
</reference>
<organism>
    <name type="scientific">Escherichia coli O157:H7</name>
    <dbReference type="NCBI Taxonomy" id="83334"/>
    <lineage>
        <taxon>Bacteria</taxon>
        <taxon>Pseudomonadati</taxon>
        <taxon>Pseudomonadota</taxon>
        <taxon>Gammaproteobacteria</taxon>
        <taxon>Enterobacterales</taxon>
        <taxon>Enterobacteriaceae</taxon>
        <taxon>Escherichia</taxon>
    </lineage>
</organism>
<dbReference type="EMBL" id="AE005174">
    <property type="protein sequence ID" value="AAG58027.1"/>
    <property type="molecule type" value="Genomic_DNA"/>
</dbReference>
<dbReference type="EMBL" id="BA000007">
    <property type="protein sequence ID" value="BAB37194.1"/>
    <property type="molecule type" value="Genomic_DNA"/>
</dbReference>
<dbReference type="PIR" id="C91100">
    <property type="entry name" value="C91100"/>
</dbReference>
<dbReference type="PIR" id="G85945">
    <property type="entry name" value="G85945"/>
</dbReference>
<dbReference type="RefSeq" id="NP_311798.1">
    <property type="nucleotide sequence ID" value="NC_002695.1"/>
</dbReference>
<dbReference type="SMR" id="P67155"/>
<dbReference type="STRING" id="155864.Z4237"/>
<dbReference type="GeneID" id="916413"/>
<dbReference type="KEGG" id="ece:Z4237"/>
<dbReference type="KEGG" id="ecs:ECs_3771"/>
<dbReference type="PATRIC" id="fig|386585.9.peg.3936"/>
<dbReference type="eggNOG" id="COG1272">
    <property type="taxonomic scope" value="Bacteria"/>
</dbReference>
<dbReference type="HOGENOM" id="CLU_051078_1_0_6"/>
<dbReference type="OMA" id="NAWTHLV"/>
<dbReference type="Proteomes" id="UP000000558">
    <property type="component" value="Chromosome"/>
</dbReference>
<dbReference type="Proteomes" id="UP000002519">
    <property type="component" value="Chromosome"/>
</dbReference>
<dbReference type="GO" id="GO:0005886">
    <property type="term" value="C:plasma membrane"/>
    <property type="evidence" value="ECO:0007669"/>
    <property type="project" value="UniProtKB-SubCell"/>
</dbReference>
<dbReference type="GO" id="GO:0140911">
    <property type="term" value="F:pore-forming activity"/>
    <property type="evidence" value="ECO:0007669"/>
    <property type="project" value="InterPro"/>
</dbReference>
<dbReference type="InterPro" id="IPR004254">
    <property type="entry name" value="AdipoR/HlyIII-related"/>
</dbReference>
<dbReference type="InterPro" id="IPR005744">
    <property type="entry name" value="Hy-lIII"/>
</dbReference>
<dbReference type="NCBIfam" id="TIGR01065">
    <property type="entry name" value="hlyIII"/>
    <property type="match status" value="1"/>
</dbReference>
<dbReference type="NCBIfam" id="NF011669">
    <property type="entry name" value="PRK15087.1"/>
    <property type="match status" value="1"/>
</dbReference>
<dbReference type="PANTHER" id="PTHR20855">
    <property type="entry name" value="ADIPOR/PROGESTIN RECEPTOR-RELATED"/>
    <property type="match status" value="1"/>
</dbReference>
<dbReference type="PANTHER" id="PTHR20855:SF3">
    <property type="entry name" value="LD03007P"/>
    <property type="match status" value="1"/>
</dbReference>
<dbReference type="Pfam" id="PF03006">
    <property type="entry name" value="HlyIII"/>
    <property type="match status" value="1"/>
</dbReference>
<evidence type="ECO:0000250" key="1">
    <source>
        <dbReference type="UniProtKB" id="P67153"/>
    </source>
</evidence>
<evidence type="ECO:0000255" key="2"/>
<evidence type="ECO:0000305" key="3"/>